<protein>
    <recommendedName>
        <fullName evidence="1">HMP-PP phosphatase</fullName>
        <ecNumber evidence="1">3.6.1.-</ecNumber>
    </recommendedName>
</protein>
<dbReference type="EC" id="3.6.1.-" evidence="1"/>
<dbReference type="EMBL" id="CP000826">
    <property type="protein sequence ID" value="ABV40208.1"/>
    <property type="molecule type" value="Genomic_DNA"/>
</dbReference>
<dbReference type="SMR" id="A8GAR8"/>
<dbReference type="STRING" id="399741.Spro_1104"/>
<dbReference type="KEGG" id="spe:Spro_1104"/>
<dbReference type="eggNOG" id="COG0561">
    <property type="taxonomic scope" value="Bacteria"/>
</dbReference>
<dbReference type="HOGENOM" id="CLU_044146_5_2_6"/>
<dbReference type="OrthoDB" id="5498330at2"/>
<dbReference type="GO" id="GO:0002145">
    <property type="term" value="F:4-amino-5-hydroxymethyl-2-methylpyrimidine diphosphatase activity"/>
    <property type="evidence" value="ECO:0007669"/>
    <property type="project" value="RHEA"/>
</dbReference>
<dbReference type="GO" id="GO:0000287">
    <property type="term" value="F:magnesium ion binding"/>
    <property type="evidence" value="ECO:0000250"/>
    <property type="project" value="UniProtKB"/>
</dbReference>
<dbReference type="GO" id="GO:0016791">
    <property type="term" value="F:phosphatase activity"/>
    <property type="evidence" value="ECO:0000250"/>
    <property type="project" value="UniProtKB"/>
</dbReference>
<dbReference type="CDD" id="cd07516">
    <property type="entry name" value="HAD_Pase"/>
    <property type="match status" value="1"/>
</dbReference>
<dbReference type="Gene3D" id="3.30.1240.10">
    <property type="match status" value="1"/>
</dbReference>
<dbReference type="Gene3D" id="3.40.50.1000">
    <property type="entry name" value="HAD superfamily/HAD-like"/>
    <property type="match status" value="1"/>
</dbReference>
<dbReference type="HAMAP" id="MF_01847">
    <property type="entry name" value="HMP_PP_phosphat"/>
    <property type="match status" value="1"/>
</dbReference>
<dbReference type="InterPro" id="IPR000150">
    <property type="entry name" value="Cof"/>
</dbReference>
<dbReference type="InterPro" id="IPR036412">
    <property type="entry name" value="HAD-like_sf"/>
</dbReference>
<dbReference type="InterPro" id="IPR006379">
    <property type="entry name" value="HAD-SF_hydro_IIB"/>
</dbReference>
<dbReference type="InterPro" id="IPR023214">
    <property type="entry name" value="HAD_sf"/>
</dbReference>
<dbReference type="InterPro" id="IPR023938">
    <property type="entry name" value="HMP-PP_phosphatase"/>
</dbReference>
<dbReference type="NCBIfam" id="TIGR00099">
    <property type="entry name" value="Cof-subfamily"/>
    <property type="match status" value="1"/>
</dbReference>
<dbReference type="NCBIfam" id="TIGR01484">
    <property type="entry name" value="HAD-SF-IIB"/>
    <property type="match status" value="1"/>
</dbReference>
<dbReference type="NCBIfam" id="NF011705">
    <property type="entry name" value="PRK15126.1"/>
    <property type="match status" value="1"/>
</dbReference>
<dbReference type="PANTHER" id="PTHR47267">
    <property type="match status" value="1"/>
</dbReference>
<dbReference type="PANTHER" id="PTHR47267:SF2">
    <property type="entry name" value="HMP-PP PHOSPHATASE"/>
    <property type="match status" value="1"/>
</dbReference>
<dbReference type="Pfam" id="PF08282">
    <property type="entry name" value="Hydrolase_3"/>
    <property type="match status" value="1"/>
</dbReference>
<dbReference type="SFLD" id="SFLDG01140">
    <property type="entry name" value="C2.B:_Phosphomannomutase_and_P"/>
    <property type="match status" value="1"/>
</dbReference>
<dbReference type="SFLD" id="SFLDS00003">
    <property type="entry name" value="Haloacid_Dehalogenase"/>
    <property type="match status" value="1"/>
</dbReference>
<dbReference type="SUPFAM" id="SSF56784">
    <property type="entry name" value="HAD-like"/>
    <property type="match status" value="1"/>
</dbReference>
<dbReference type="PROSITE" id="PS01228">
    <property type="entry name" value="COF_1"/>
    <property type="match status" value="1"/>
</dbReference>
<dbReference type="PROSITE" id="PS01229">
    <property type="entry name" value="COF_2"/>
    <property type="match status" value="1"/>
</dbReference>
<reference key="1">
    <citation type="submission" date="2007-09" db="EMBL/GenBank/DDBJ databases">
        <title>Complete sequence of chromosome of Serratia proteamaculans 568.</title>
        <authorList>
            <consortium name="US DOE Joint Genome Institute"/>
            <person name="Copeland A."/>
            <person name="Lucas S."/>
            <person name="Lapidus A."/>
            <person name="Barry K."/>
            <person name="Glavina del Rio T."/>
            <person name="Dalin E."/>
            <person name="Tice H."/>
            <person name="Pitluck S."/>
            <person name="Chain P."/>
            <person name="Malfatti S."/>
            <person name="Shin M."/>
            <person name="Vergez L."/>
            <person name="Schmutz J."/>
            <person name="Larimer F."/>
            <person name="Land M."/>
            <person name="Hauser L."/>
            <person name="Kyrpides N."/>
            <person name="Kim E."/>
            <person name="Taghavi S."/>
            <person name="Newman L."/>
            <person name="Vangronsveld J."/>
            <person name="van der Lelie D."/>
            <person name="Richardson P."/>
        </authorList>
    </citation>
    <scope>NUCLEOTIDE SEQUENCE [LARGE SCALE GENOMIC DNA]</scope>
    <source>
        <strain>568</strain>
    </source>
</reference>
<organism>
    <name type="scientific">Serratia proteamaculans (strain 568)</name>
    <dbReference type="NCBI Taxonomy" id="399741"/>
    <lineage>
        <taxon>Bacteria</taxon>
        <taxon>Pseudomonadati</taxon>
        <taxon>Pseudomonadota</taxon>
        <taxon>Gammaproteobacteria</taxon>
        <taxon>Enterobacterales</taxon>
        <taxon>Yersiniaceae</taxon>
        <taxon>Serratia</taxon>
    </lineage>
</organism>
<name>COF_SERP5</name>
<comment type="function">
    <text evidence="1">Catalyzes the hydrolysis of 4-amino-2-methyl-5-hydroxymethylpyrimidine pyrophosphate (HMP-PP) to 4-amino-2-methyl-5-hydroxymethylpyrimidine phosphate (HMP-P).</text>
</comment>
<comment type="catalytic activity">
    <reaction evidence="1">
        <text>4-amino-2-methyl-5-(diphosphooxymethyl)pyrimidine + H2O = 4-amino-2-methyl-5-(phosphooxymethyl)pyrimidine + phosphate + H(+)</text>
        <dbReference type="Rhea" id="RHEA:27914"/>
        <dbReference type="ChEBI" id="CHEBI:15377"/>
        <dbReference type="ChEBI" id="CHEBI:15378"/>
        <dbReference type="ChEBI" id="CHEBI:43474"/>
        <dbReference type="ChEBI" id="CHEBI:57841"/>
        <dbReference type="ChEBI" id="CHEBI:58354"/>
    </reaction>
</comment>
<comment type="cofactor">
    <cofactor evidence="1">
        <name>Mg(2+)</name>
        <dbReference type="ChEBI" id="CHEBI:18420"/>
    </cofactor>
</comment>
<comment type="similarity">
    <text evidence="1">Belongs to the HAD-like hydrolase superfamily. Cof family.</text>
</comment>
<accession>A8GAR8</accession>
<gene>
    <name evidence="1" type="primary">cof</name>
    <name type="ordered locus">Spro_1104</name>
</gene>
<keyword id="KW-0378">Hydrolase</keyword>
<keyword id="KW-0460">Magnesium</keyword>
<keyword id="KW-0479">Metal-binding</keyword>
<sequence>MYRLAAFDMDGTLLTPDHRVGPETLAVLKQLVEREMVVTFATGRHYLDAQPIMAQLGLQGYLITGNGTRVYDDRGQQLQATDLPADIAEEVLHTHWHTDASMHVFRDEGWMTEFAVPEEMLRAHHLSGFHYQLTELRRLPAFGNSKVCFAGPHEELLKLQVQLRRHFAARVDLCFSAYECLEVLPLGCNKGSALDMLSRHLGLKMAECMAFGDAMNDKEMLATVGHGVVMGNALPQLKSLLPQLQVIGHCEQQAVAHYLQHWLRSPYLTYSPEL</sequence>
<feature type="chain" id="PRO_0000342994" description="HMP-PP phosphatase">
    <location>
        <begin position="1"/>
        <end position="274"/>
    </location>
</feature>
<feature type="active site" description="Nucleophile" evidence="1">
    <location>
        <position position="8"/>
    </location>
</feature>
<feature type="binding site" evidence="1">
    <location>
        <position position="8"/>
    </location>
    <ligand>
        <name>Mg(2+)</name>
        <dbReference type="ChEBI" id="CHEBI:18420"/>
    </ligand>
</feature>
<feature type="binding site" evidence="1">
    <location>
        <position position="10"/>
    </location>
    <ligand>
        <name>Mg(2+)</name>
        <dbReference type="ChEBI" id="CHEBI:18420"/>
    </ligand>
</feature>
<feature type="binding site" evidence="1">
    <location>
        <position position="213"/>
    </location>
    <ligand>
        <name>Mg(2+)</name>
        <dbReference type="ChEBI" id="CHEBI:18420"/>
    </ligand>
</feature>
<proteinExistence type="inferred from homology"/>
<evidence type="ECO:0000255" key="1">
    <source>
        <dbReference type="HAMAP-Rule" id="MF_01847"/>
    </source>
</evidence>